<protein>
    <recommendedName>
        <fullName>Secretion system apparatus protein SsaL</fullName>
    </recommendedName>
</protein>
<name>SSAL_SALTY</name>
<keyword id="KW-0653">Protein transport</keyword>
<keyword id="KW-1185">Reference proteome</keyword>
<keyword id="KW-0813">Transport</keyword>
<dbReference type="EMBL" id="Y09357">
    <property type="protein sequence ID" value="CAA70534.1"/>
    <property type="molecule type" value="Genomic_DNA"/>
</dbReference>
<dbReference type="EMBL" id="AE006468">
    <property type="protein sequence ID" value="AAL20336.1"/>
    <property type="molecule type" value="Genomic_DNA"/>
</dbReference>
<dbReference type="RefSeq" id="NP_460377.1">
    <property type="nucleotide sequence ID" value="NC_003197.2"/>
</dbReference>
<dbReference type="RefSeq" id="WP_000238877.1">
    <property type="nucleotide sequence ID" value="NC_003197.2"/>
</dbReference>
<dbReference type="SMR" id="P74854"/>
<dbReference type="STRING" id="99287.STM1412"/>
<dbReference type="PaxDb" id="99287-STM1412"/>
<dbReference type="GeneID" id="1252930"/>
<dbReference type="KEGG" id="stm:STM1412"/>
<dbReference type="PATRIC" id="fig|99287.12.peg.1496"/>
<dbReference type="HOGENOM" id="CLU_062002_0_0_6"/>
<dbReference type="OMA" id="EDKHVYY"/>
<dbReference type="BioCyc" id="SENT99287:STM1412-MONOMER"/>
<dbReference type="Proteomes" id="UP000001014">
    <property type="component" value="Chromosome"/>
</dbReference>
<dbReference type="GO" id="GO:0019867">
    <property type="term" value="C:outer membrane"/>
    <property type="evidence" value="ECO:0007669"/>
    <property type="project" value="InterPro"/>
</dbReference>
<dbReference type="GO" id="GO:0015031">
    <property type="term" value="P:protein transport"/>
    <property type="evidence" value="ECO:0007669"/>
    <property type="project" value="UniProtKB-KW"/>
</dbReference>
<dbReference type="GO" id="GO:0046903">
    <property type="term" value="P:secretion"/>
    <property type="evidence" value="ECO:0007669"/>
    <property type="project" value="InterPro"/>
</dbReference>
<dbReference type="Gene3D" id="1.20.1280.80">
    <property type="match status" value="1"/>
</dbReference>
<dbReference type="InterPro" id="IPR010812">
    <property type="entry name" value="HrpJ-like"/>
</dbReference>
<dbReference type="InterPro" id="IPR013351">
    <property type="entry name" value="T3SS_TyeA-rel"/>
</dbReference>
<dbReference type="InterPro" id="IPR038347">
    <property type="entry name" value="TyeA_sf"/>
</dbReference>
<dbReference type="NCBIfam" id="NF011872">
    <property type="entry name" value="PRK15345.1"/>
    <property type="match status" value="1"/>
</dbReference>
<dbReference type="NCBIfam" id="TIGR02511">
    <property type="entry name" value="type_III_tyeA"/>
    <property type="match status" value="1"/>
</dbReference>
<dbReference type="Pfam" id="PF07201">
    <property type="entry name" value="HrpJ"/>
    <property type="match status" value="1"/>
</dbReference>
<dbReference type="SUPFAM" id="SSF140591">
    <property type="entry name" value="Type III secretion system domain"/>
    <property type="match status" value="1"/>
</dbReference>
<proteinExistence type="predicted"/>
<accession>P74854</accession>
<feature type="chain" id="PRO_0000072204" description="Secretion system apparatus protein SsaL">
    <location>
        <begin position="1"/>
        <end position="338"/>
    </location>
</feature>
<gene>
    <name type="primary">ssaL</name>
    <name type="ordered locus">STM1412</name>
</gene>
<organism>
    <name type="scientific">Salmonella typhimurium (strain LT2 / SGSC1412 / ATCC 700720)</name>
    <dbReference type="NCBI Taxonomy" id="99287"/>
    <lineage>
        <taxon>Bacteria</taxon>
        <taxon>Pseudomonadati</taxon>
        <taxon>Pseudomonadota</taxon>
        <taxon>Gammaproteobacteria</taxon>
        <taxon>Enterobacterales</taxon>
        <taxon>Enterobacteriaceae</taxon>
        <taxon>Salmonella</taxon>
    </lineage>
</organism>
<reference key="1">
    <citation type="journal article" date="1997" name="Mol. Microbiol.">
        <title>Functional analysis of ssaJ and the ssaK/U operon, 13 genes encoding components of the type III secretion apparatus of Salmonella pathogenicity island 2.</title>
        <authorList>
            <person name="Hensel M."/>
            <person name="Shea J.E."/>
            <person name="Raupach B."/>
            <person name="Monack D."/>
            <person name="Falkow S."/>
            <person name="Gleeson C."/>
            <person name="Kubo T."/>
            <person name="Holden D.W."/>
        </authorList>
    </citation>
    <scope>NUCLEOTIDE SEQUENCE [GENOMIC DNA]</scope>
    <source>
        <strain>LT2</strain>
    </source>
</reference>
<reference key="2">
    <citation type="journal article" date="2001" name="Nature">
        <title>Complete genome sequence of Salmonella enterica serovar Typhimurium LT2.</title>
        <authorList>
            <person name="McClelland M."/>
            <person name="Sanderson K.E."/>
            <person name="Spieth J."/>
            <person name="Clifton S.W."/>
            <person name="Latreille P."/>
            <person name="Courtney L."/>
            <person name="Porwollik S."/>
            <person name="Ali J."/>
            <person name="Dante M."/>
            <person name="Du F."/>
            <person name="Hou S."/>
            <person name="Layman D."/>
            <person name="Leonard S."/>
            <person name="Nguyen C."/>
            <person name="Scott K."/>
            <person name="Holmes A."/>
            <person name="Grewal N."/>
            <person name="Mulvaney E."/>
            <person name="Ryan E."/>
            <person name="Sun H."/>
            <person name="Florea L."/>
            <person name="Miller W."/>
            <person name="Stoneking T."/>
            <person name="Nhan M."/>
            <person name="Waterston R."/>
            <person name="Wilson R.K."/>
        </authorList>
    </citation>
    <scope>NUCLEOTIDE SEQUENCE [LARGE SCALE GENOMIC DNA]</scope>
    <source>
        <strain>LT2 / SGSC1412 / ATCC 700720</strain>
    </source>
</reference>
<sequence length="338" mass="38900">MVKIKEVAMNIKINEIKMTPPTAFTPGQVIEEQEVISPSMLALQELQETTGAALYETMEEIGMALSGKLRENYKFTDAEKLERRQQALLRLIKQIQEDNGATLRPLTEENSDPDLQNAYQIIALAMALTAGGLSKKKKRDLQSQLDTLTAEEGWELAVFSLLELGEVDTATLSSLKRFMQQAIDNDEMPLSQWFRRVADWPDRCERVRILLRAVAFELSICIEPSEQSRLAAALVRLRRLLLFLGLEKECQREEWICQLPPNTLLPLLLDIICERWLFSDWLLDRLTAIVSSSKMFNRLLQQLDAQFMLIPDNCFNDEDQREQILETLREVKINQVLF</sequence>